<protein>
    <recommendedName>
        <fullName evidence="1">Holliday junction branch migration complex subunit RuvB</fullName>
        <ecNumber evidence="1">3.6.4.-</ecNumber>
    </recommendedName>
</protein>
<accession>C0ZZ48</accession>
<name>RUVB_RHOE4</name>
<keyword id="KW-0067">ATP-binding</keyword>
<keyword id="KW-0963">Cytoplasm</keyword>
<keyword id="KW-0227">DNA damage</keyword>
<keyword id="KW-0233">DNA recombination</keyword>
<keyword id="KW-0234">DNA repair</keyword>
<keyword id="KW-0238">DNA-binding</keyword>
<keyword id="KW-0378">Hydrolase</keyword>
<keyword id="KW-0547">Nucleotide-binding</keyword>
<gene>
    <name evidence="1" type="primary">ruvB</name>
    <name type="ordered locus">RER_29250</name>
</gene>
<dbReference type="EC" id="3.6.4.-" evidence="1"/>
<dbReference type="EMBL" id="AP008957">
    <property type="protein sequence ID" value="BAH33633.1"/>
    <property type="molecule type" value="Genomic_DNA"/>
</dbReference>
<dbReference type="RefSeq" id="WP_019748300.1">
    <property type="nucleotide sequence ID" value="NC_012490.1"/>
</dbReference>
<dbReference type="SMR" id="C0ZZ48"/>
<dbReference type="GeneID" id="57487135"/>
<dbReference type="KEGG" id="rer:RER_29250"/>
<dbReference type="eggNOG" id="COG2255">
    <property type="taxonomic scope" value="Bacteria"/>
</dbReference>
<dbReference type="HOGENOM" id="CLU_055599_1_0_11"/>
<dbReference type="Proteomes" id="UP000002204">
    <property type="component" value="Chromosome"/>
</dbReference>
<dbReference type="GO" id="GO:0005737">
    <property type="term" value="C:cytoplasm"/>
    <property type="evidence" value="ECO:0007669"/>
    <property type="project" value="UniProtKB-SubCell"/>
</dbReference>
<dbReference type="GO" id="GO:0048476">
    <property type="term" value="C:Holliday junction resolvase complex"/>
    <property type="evidence" value="ECO:0007669"/>
    <property type="project" value="UniProtKB-UniRule"/>
</dbReference>
<dbReference type="GO" id="GO:0005524">
    <property type="term" value="F:ATP binding"/>
    <property type="evidence" value="ECO:0007669"/>
    <property type="project" value="UniProtKB-UniRule"/>
</dbReference>
<dbReference type="GO" id="GO:0016887">
    <property type="term" value="F:ATP hydrolysis activity"/>
    <property type="evidence" value="ECO:0007669"/>
    <property type="project" value="InterPro"/>
</dbReference>
<dbReference type="GO" id="GO:0000400">
    <property type="term" value="F:four-way junction DNA binding"/>
    <property type="evidence" value="ECO:0007669"/>
    <property type="project" value="UniProtKB-UniRule"/>
</dbReference>
<dbReference type="GO" id="GO:0009378">
    <property type="term" value="F:four-way junction helicase activity"/>
    <property type="evidence" value="ECO:0007669"/>
    <property type="project" value="InterPro"/>
</dbReference>
<dbReference type="GO" id="GO:0006310">
    <property type="term" value="P:DNA recombination"/>
    <property type="evidence" value="ECO:0007669"/>
    <property type="project" value="UniProtKB-UniRule"/>
</dbReference>
<dbReference type="GO" id="GO:0006281">
    <property type="term" value="P:DNA repair"/>
    <property type="evidence" value="ECO:0007669"/>
    <property type="project" value="UniProtKB-UniRule"/>
</dbReference>
<dbReference type="CDD" id="cd00009">
    <property type="entry name" value="AAA"/>
    <property type="match status" value="1"/>
</dbReference>
<dbReference type="Gene3D" id="1.10.8.60">
    <property type="match status" value="1"/>
</dbReference>
<dbReference type="Gene3D" id="3.40.50.300">
    <property type="entry name" value="P-loop containing nucleotide triphosphate hydrolases"/>
    <property type="match status" value="1"/>
</dbReference>
<dbReference type="Gene3D" id="1.10.10.10">
    <property type="entry name" value="Winged helix-like DNA-binding domain superfamily/Winged helix DNA-binding domain"/>
    <property type="match status" value="1"/>
</dbReference>
<dbReference type="HAMAP" id="MF_00016">
    <property type="entry name" value="DNA_HJ_migration_RuvB"/>
    <property type="match status" value="1"/>
</dbReference>
<dbReference type="InterPro" id="IPR003593">
    <property type="entry name" value="AAA+_ATPase"/>
</dbReference>
<dbReference type="InterPro" id="IPR041445">
    <property type="entry name" value="AAA_lid_4"/>
</dbReference>
<dbReference type="InterPro" id="IPR004605">
    <property type="entry name" value="DNA_helicase_Holl-junc_RuvB"/>
</dbReference>
<dbReference type="InterPro" id="IPR027417">
    <property type="entry name" value="P-loop_NTPase"/>
</dbReference>
<dbReference type="InterPro" id="IPR008824">
    <property type="entry name" value="RuvB-like_N"/>
</dbReference>
<dbReference type="InterPro" id="IPR008823">
    <property type="entry name" value="RuvB_C"/>
</dbReference>
<dbReference type="InterPro" id="IPR036388">
    <property type="entry name" value="WH-like_DNA-bd_sf"/>
</dbReference>
<dbReference type="InterPro" id="IPR036390">
    <property type="entry name" value="WH_DNA-bd_sf"/>
</dbReference>
<dbReference type="NCBIfam" id="NF000868">
    <property type="entry name" value="PRK00080.1"/>
    <property type="match status" value="1"/>
</dbReference>
<dbReference type="NCBIfam" id="TIGR00635">
    <property type="entry name" value="ruvB"/>
    <property type="match status" value="1"/>
</dbReference>
<dbReference type="PANTHER" id="PTHR42848">
    <property type="match status" value="1"/>
</dbReference>
<dbReference type="PANTHER" id="PTHR42848:SF1">
    <property type="entry name" value="HOLLIDAY JUNCTION BRANCH MIGRATION COMPLEX SUBUNIT RUVB"/>
    <property type="match status" value="1"/>
</dbReference>
<dbReference type="Pfam" id="PF17864">
    <property type="entry name" value="AAA_lid_4"/>
    <property type="match status" value="1"/>
</dbReference>
<dbReference type="Pfam" id="PF05491">
    <property type="entry name" value="RuvB_C"/>
    <property type="match status" value="1"/>
</dbReference>
<dbReference type="Pfam" id="PF05496">
    <property type="entry name" value="RuvB_N"/>
    <property type="match status" value="1"/>
</dbReference>
<dbReference type="SMART" id="SM00382">
    <property type="entry name" value="AAA"/>
    <property type="match status" value="1"/>
</dbReference>
<dbReference type="SUPFAM" id="SSF52540">
    <property type="entry name" value="P-loop containing nucleoside triphosphate hydrolases"/>
    <property type="match status" value="1"/>
</dbReference>
<dbReference type="SUPFAM" id="SSF46785">
    <property type="entry name" value="Winged helix' DNA-binding domain"/>
    <property type="match status" value="1"/>
</dbReference>
<proteinExistence type="inferred from homology"/>
<evidence type="ECO:0000255" key="1">
    <source>
        <dbReference type="HAMAP-Rule" id="MF_00016"/>
    </source>
</evidence>
<feature type="chain" id="PRO_1000201844" description="Holliday junction branch migration complex subunit RuvB">
    <location>
        <begin position="1"/>
        <end position="365"/>
    </location>
</feature>
<feature type="region of interest" description="Large ATPase domain (RuvB-L)" evidence="1">
    <location>
        <begin position="1"/>
        <end position="191"/>
    </location>
</feature>
<feature type="region of interest" description="Small ATPAse domain (RuvB-S)" evidence="1">
    <location>
        <begin position="192"/>
        <end position="262"/>
    </location>
</feature>
<feature type="region of interest" description="Head domain (RuvB-H)" evidence="1">
    <location>
        <begin position="265"/>
        <end position="365"/>
    </location>
</feature>
<feature type="binding site" evidence="1">
    <location>
        <position position="30"/>
    </location>
    <ligand>
        <name>ATP</name>
        <dbReference type="ChEBI" id="CHEBI:30616"/>
    </ligand>
</feature>
<feature type="binding site" evidence="1">
    <location>
        <position position="31"/>
    </location>
    <ligand>
        <name>ATP</name>
        <dbReference type="ChEBI" id="CHEBI:30616"/>
    </ligand>
</feature>
<feature type="binding site" evidence="1">
    <location>
        <position position="72"/>
    </location>
    <ligand>
        <name>ATP</name>
        <dbReference type="ChEBI" id="CHEBI:30616"/>
    </ligand>
</feature>
<feature type="binding site" evidence="1">
    <location>
        <position position="75"/>
    </location>
    <ligand>
        <name>ATP</name>
        <dbReference type="ChEBI" id="CHEBI:30616"/>
    </ligand>
</feature>
<feature type="binding site" evidence="1">
    <location>
        <position position="76"/>
    </location>
    <ligand>
        <name>ATP</name>
        <dbReference type="ChEBI" id="CHEBI:30616"/>
    </ligand>
</feature>
<feature type="binding site" evidence="1">
    <location>
        <position position="76"/>
    </location>
    <ligand>
        <name>Mg(2+)</name>
        <dbReference type="ChEBI" id="CHEBI:18420"/>
    </ligand>
</feature>
<feature type="binding site" evidence="1">
    <location>
        <position position="77"/>
    </location>
    <ligand>
        <name>ATP</name>
        <dbReference type="ChEBI" id="CHEBI:30616"/>
    </ligand>
</feature>
<feature type="binding site" evidence="1">
    <location>
        <begin position="138"/>
        <end position="140"/>
    </location>
    <ligand>
        <name>ATP</name>
        <dbReference type="ChEBI" id="CHEBI:30616"/>
    </ligand>
</feature>
<feature type="binding site" evidence="1">
    <location>
        <position position="181"/>
    </location>
    <ligand>
        <name>ATP</name>
        <dbReference type="ChEBI" id="CHEBI:30616"/>
    </ligand>
</feature>
<feature type="binding site" evidence="1">
    <location>
        <position position="191"/>
    </location>
    <ligand>
        <name>ATP</name>
        <dbReference type="ChEBI" id="CHEBI:30616"/>
    </ligand>
</feature>
<feature type="binding site" evidence="1">
    <location>
        <position position="228"/>
    </location>
    <ligand>
        <name>ATP</name>
        <dbReference type="ChEBI" id="CHEBI:30616"/>
    </ligand>
</feature>
<feature type="binding site" evidence="1">
    <location>
        <position position="320"/>
    </location>
    <ligand>
        <name>DNA</name>
        <dbReference type="ChEBI" id="CHEBI:16991"/>
    </ligand>
</feature>
<feature type="binding site" evidence="1">
    <location>
        <position position="325"/>
    </location>
    <ligand>
        <name>DNA</name>
        <dbReference type="ChEBI" id="CHEBI:16991"/>
    </ligand>
</feature>
<comment type="function">
    <text evidence="1">The RuvA-RuvB-RuvC complex processes Holliday junction (HJ) DNA during genetic recombination and DNA repair, while the RuvA-RuvB complex plays an important role in the rescue of blocked DNA replication forks via replication fork reversal (RFR). RuvA specifically binds to HJ cruciform DNA, conferring on it an open structure. The RuvB hexamer acts as an ATP-dependent pump, pulling dsDNA into and through the RuvAB complex. RuvB forms 2 homohexamers on either side of HJ DNA bound by 1 or 2 RuvA tetramers; 4 subunits per hexamer contact DNA at a time. Coordinated motions by a converter formed by DNA-disengaged RuvB subunits stimulates ATP hydrolysis and nucleotide exchange. Immobilization of the converter enables RuvB to convert the ATP-contained energy into a lever motion, pulling 2 nucleotides of DNA out of the RuvA tetramer per ATP hydrolyzed, thus driving DNA branch migration. The RuvB motors rotate together with the DNA substrate, which together with the progressing nucleotide cycle form the mechanistic basis for DNA recombination by continuous HJ branch migration. Branch migration allows RuvC to scan DNA until it finds its consensus sequence, where it cleaves and resolves cruciform DNA.</text>
</comment>
<comment type="catalytic activity">
    <reaction evidence="1">
        <text>ATP + H2O = ADP + phosphate + H(+)</text>
        <dbReference type="Rhea" id="RHEA:13065"/>
        <dbReference type="ChEBI" id="CHEBI:15377"/>
        <dbReference type="ChEBI" id="CHEBI:15378"/>
        <dbReference type="ChEBI" id="CHEBI:30616"/>
        <dbReference type="ChEBI" id="CHEBI:43474"/>
        <dbReference type="ChEBI" id="CHEBI:456216"/>
    </reaction>
</comment>
<comment type="subunit">
    <text evidence="1">Homohexamer. Forms an RuvA(8)-RuvB(12)-Holliday junction (HJ) complex. HJ DNA is sandwiched between 2 RuvA tetramers; dsDNA enters through RuvA and exits via RuvB. An RuvB hexamer assembles on each DNA strand where it exits the tetramer. Each RuvB hexamer is contacted by two RuvA subunits (via domain III) on 2 adjacent RuvB subunits; this complex drives branch migration. In the full resolvosome a probable DNA-RuvA(4)-RuvB(12)-RuvC(2) complex forms which resolves the HJ.</text>
</comment>
<comment type="subcellular location">
    <subcellularLocation>
        <location evidence="1">Cytoplasm</location>
    </subcellularLocation>
</comment>
<comment type="domain">
    <text evidence="1">Has 3 domains, the large (RuvB-L) and small ATPase (RuvB-S) domains and the C-terminal head (RuvB-H) domain. The head domain binds DNA, while the ATPase domains jointly bind ATP, ADP or are empty depending on the state of the subunit in the translocation cycle. During a single DNA translocation step the structure of each domain remains the same, but their relative positions change.</text>
</comment>
<comment type="similarity">
    <text evidence="1">Belongs to the RuvB family.</text>
</comment>
<organism>
    <name type="scientific">Rhodococcus erythropolis (strain PR4 / NBRC 100887)</name>
    <dbReference type="NCBI Taxonomy" id="234621"/>
    <lineage>
        <taxon>Bacteria</taxon>
        <taxon>Bacillati</taxon>
        <taxon>Actinomycetota</taxon>
        <taxon>Actinomycetes</taxon>
        <taxon>Mycobacteriales</taxon>
        <taxon>Nocardiaceae</taxon>
        <taxon>Rhodococcus</taxon>
        <taxon>Rhodococcus erythropolis group</taxon>
    </lineage>
</organism>
<sequence>MNFDPIDDFDDESQVSAELVAGDGDVEASLRPKSLDDFIGQPRVREQLQLVLTGAKLRGSTPDHILMSGPPGLGKTSMAMIIAGELGSSLRLTSGPALERAGDLAAMLSNLVEGDVLFIDEIHRIARPAEEMLYLAMEDFRVDVVVGKGPGATSIPLEVAPFTLVGATTRSGALTGPLRDRFGFTAHMDFYEPEELQQILMRSAGILGVNLEVDAGAEIARRSRGTPRIANRLLRRVRDFAEVRADGIVTMDVAQAALAVYDVDQLGLDRLDRSVLSALVRSFGGGPVGVSTLAVAVGEEPSTVEEVCEPFLVRAGMIARTPRGRVATAAAWTQLGMTPPPDAAAGGIEVRVNEPQATLFDPNGE</sequence>
<reference key="1">
    <citation type="submission" date="2005-03" db="EMBL/GenBank/DDBJ databases">
        <title>Comparison of the complete genome sequences of Rhodococcus erythropolis PR4 and Rhodococcus opacus B4.</title>
        <authorList>
            <person name="Takarada H."/>
            <person name="Sekine M."/>
            <person name="Hosoyama A."/>
            <person name="Yamada R."/>
            <person name="Fujisawa T."/>
            <person name="Omata S."/>
            <person name="Shimizu A."/>
            <person name="Tsukatani N."/>
            <person name="Tanikawa S."/>
            <person name="Fujita N."/>
            <person name="Harayama S."/>
        </authorList>
    </citation>
    <scope>NUCLEOTIDE SEQUENCE [LARGE SCALE GENOMIC DNA]</scope>
    <source>
        <strain>PR4 / NBRC 100887</strain>
    </source>
</reference>